<organism>
    <name type="scientific">African swine fever virus (isolate Pig/Kenya/KEN-50/1950)</name>
    <name type="common">ASFV</name>
    <dbReference type="NCBI Taxonomy" id="561445"/>
    <lineage>
        <taxon>Viruses</taxon>
        <taxon>Varidnaviria</taxon>
        <taxon>Bamfordvirae</taxon>
        <taxon>Nucleocytoviricota</taxon>
        <taxon>Pokkesviricetes</taxon>
        <taxon>Asfuvirales</taxon>
        <taxon>Asfarviridae</taxon>
        <taxon>Asfivirus</taxon>
        <taxon>African swine fever virus</taxon>
    </lineage>
</organism>
<evidence type="ECO:0000250" key="1">
    <source>
        <dbReference type="UniProtKB" id="Q65158"/>
    </source>
</evidence>
<evidence type="ECO:0000255" key="2"/>
<evidence type="ECO:0000305" key="3"/>
<keyword id="KW-1043">Host membrane</keyword>
<keyword id="KW-0426">Late protein</keyword>
<keyword id="KW-0472">Membrane</keyword>
<keyword id="KW-0812">Transmembrane</keyword>
<keyword id="KW-1133">Transmembrane helix</keyword>
<keyword id="KW-0946">Virion</keyword>
<reference key="1">
    <citation type="submission" date="2003-03" db="EMBL/GenBank/DDBJ databases">
        <title>African swine fever virus genomes.</title>
        <authorList>
            <person name="Kutish G.F."/>
            <person name="Rock D.L."/>
        </authorList>
    </citation>
    <scope>NUCLEOTIDE SEQUENCE [LARGE SCALE GENOMIC DNA]</scope>
</reference>
<name>VF257_ASFK5</name>
<dbReference type="EMBL" id="AY261360">
    <property type="status" value="NOT_ANNOTATED_CDS"/>
    <property type="molecule type" value="Genomic_DNA"/>
</dbReference>
<dbReference type="SMR" id="P0CAB7"/>
<dbReference type="Proteomes" id="UP000000861">
    <property type="component" value="Segment"/>
</dbReference>
<dbReference type="GO" id="GO:0033644">
    <property type="term" value="C:host cell membrane"/>
    <property type="evidence" value="ECO:0007669"/>
    <property type="project" value="UniProtKB-SubCell"/>
</dbReference>
<dbReference type="GO" id="GO:0016020">
    <property type="term" value="C:membrane"/>
    <property type="evidence" value="ECO:0007669"/>
    <property type="project" value="UniProtKB-KW"/>
</dbReference>
<dbReference type="GO" id="GO:0044423">
    <property type="term" value="C:virion component"/>
    <property type="evidence" value="ECO:0007669"/>
    <property type="project" value="UniProtKB-KW"/>
</dbReference>
<comment type="subcellular location">
    <subcellularLocation>
        <location evidence="3">Host membrane</location>
        <topology evidence="3">Multi-pass membrane protein</topology>
    </subcellularLocation>
    <subcellularLocation>
        <location evidence="1">Virion</location>
    </subcellularLocation>
</comment>
<comment type="induction">
    <text evidence="3">Expressed in the late phase of the viral replicative cycle.</text>
</comment>
<comment type="similarity">
    <text evidence="3">Belongs to the asfivirus C257R family.</text>
</comment>
<protein>
    <recommendedName>
        <fullName>Transmembrane protein C257L</fullName>
        <shortName>pC257L</shortName>
    </recommendedName>
</protein>
<feature type="chain" id="PRO_0000373615" description="Transmembrane protein C257L">
    <location>
        <begin position="1"/>
        <end position="257"/>
    </location>
</feature>
<feature type="transmembrane region" description="Helical" evidence="2">
    <location>
        <begin position="123"/>
        <end position="143"/>
    </location>
</feature>
<feature type="transmembrane region" description="Helical" evidence="2">
    <location>
        <begin position="163"/>
        <end position="183"/>
    </location>
</feature>
<gene>
    <name type="ordered locus">Ken-078</name>
</gene>
<organismHost>
    <name type="scientific">Ornithodoros</name>
    <name type="common">relapsing fever ticks</name>
    <dbReference type="NCBI Taxonomy" id="6937"/>
</organismHost>
<organismHost>
    <name type="scientific">Phacochoerus aethiopicus</name>
    <name type="common">Warthog</name>
    <dbReference type="NCBI Taxonomy" id="85517"/>
</organismHost>
<organismHost>
    <name type="scientific">Phacochoerus africanus</name>
    <name type="common">Warthog</name>
    <dbReference type="NCBI Taxonomy" id="41426"/>
</organismHost>
<organismHost>
    <name type="scientific">Potamochoerus larvatus</name>
    <name type="common">Bushpig</name>
    <dbReference type="NCBI Taxonomy" id="273792"/>
</organismHost>
<organismHost>
    <name type="scientific">Sus scrofa</name>
    <name type="common">Pig</name>
    <dbReference type="NCBI Taxonomy" id="9823"/>
</organismHost>
<accession>P0CAB7</accession>
<proteinExistence type="inferred from homology"/>
<sequence length="257" mass="29757">MYSACDVVRDAMAQSHLCACPNDKLPQCKGVTKAPPECSVFHVAKLQDTKFKWKYTLDPLRAQKLDQINKDIEKDAITLRLIYGIELSPEDLEWWKMQRCLINKNTGAKGGQFANKYLERQDLELLGYSPTPLIGGDLMFTALPDKVLRTIPVAWDRFLNPAIMIFFLIILLCVILGIFYVLVRNTLRRKQKNKLHQMEIKRFIKEKEQDPYIHTSFESWPADPNKEWKDLIPVYEAQGYCMADYRKKLGMPPGPNC</sequence>